<comment type="function">
    <text evidence="1">Catalyzes the conversion of GTP to 2,5-diamino-6-ribosylamino-4(3H)-pyrimidinone 5'-phosphate (DARP), formate and pyrophosphate.</text>
</comment>
<comment type="catalytic activity">
    <reaction evidence="1">
        <text>GTP + 4 H2O = 2,5-diamino-6-hydroxy-4-(5-phosphoribosylamino)-pyrimidine + formate + 2 phosphate + 3 H(+)</text>
        <dbReference type="Rhea" id="RHEA:23704"/>
        <dbReference type="ChEBI" id="CHEBI:15377"/>
        <dbReference type="ChEBI" id="CHEBI:15378"/>
        <dbReference type="ChEBI" id="CHEBI:15740"/>
        <dbReference type="ChEBI" id="CHEBI:37565"/>
        <dbReference type="ChEBI" id="CHEBI:43474"/>
        <dbReference type="ChEBI" id="CHEBI:58614"/>
        <dbReference type="EC" id="3.5.4.25"/>
    </reaction>
</comment>
<comment type="cofactor">
    <cofactor evidence="1">
        <name>Zn(2+)</name>
        <dbReference type="ChEBI" id="CHEBI:29105"/>
    </cofactor>
    <text evidence="1">Binds 1 zinc ion per subunit.</text>
</comment>
<comment type="pathway">
    <text evidence="1">Cofactor biosynthesis; riboflavin biosynthesis; 5-amino-6-(D-ribitylamino)uracil from GTP: step 1/4.</text>
</comment>
<comment type="similarity">
    <text evidence="1">Belongs to the GTP cyclohydrolase II family.</text>
</comment>
<evidence type="ECO:0000255" key="1">
    <source>
        <dbReference type="HAMAP-Rule" id="MF_00179"/>
    </source>
</evidence>
<accession>A6VPG3</accession>
<protein>
    <recommendedName>
        <fullName evidence="1">GTP cyclohydrolase-2</fullName>
        <ecNumber evidence="1">3.5.4.25</ecNumber>
    </recommendedName>
    <alternativeName>
        <fullName evidence="1">GTP cyclohydrolase II</fullName>
    </alternativeName>
</protein>
<sequence length="217" mass="24179">MAKIQRVTEATLPTEFGIFKIVGFEFPDTKKEHVALVMGDVEDGQPVLARIHSECLTGDALHSLKCDCGFQLARALRQISEEGRGVLIYHREEGRGIGLINKIRAYALQDQGMDTIEANLALGFKADERNFSVCADIFEQLGVKAVRLLTNNPAKIETMKSAGINVVERVPLNVGENRYNVGYLDTKAKKMGHYIVHNNKKHFLECPHCQSEIPADE</sequence>
<organism>
    <name type="scientific">Actinobacillus succinogenes (strain ATCC 55618 / DSM 22257 / CCUG 43843 / 130Z)</name>
    <dbReference type="NCBI Taxonomy" id="339671"/>
    <lineage>
        <taxon>Bacteria</taxon>
        <taxon>Pseudomonadati</taxon>
        <taxon>Pseudomonadota</taxon>
        <taxon>Gammaproteobacteria</taxon>
        <taxon>Pasteurellales</taxon>
        <taxon>Pasteurellaceae</taxon>
        <taxon>Actinobacillus</taxon>
    </lineage>
</organism>
<name>RIBA_ACTSZ</name>
<proteinExistence type="inferred from homology"/>
<dbReference type="EC" id="3.5.4.25" evidence="1"/>
<dbReference type="EMBL" id="CP000746">
    <property type="protein sequence ID" value="ABR74860.1"/>
    <property type="molecule type" value="Genomic_DNA"/>
</dbReference>
<dbReference type="RefSeq" id="WP_012073237.1">
    <property type="nucleotide sequence ID" value="NC_009655.1"/>
</dbReference>
<dbReference type="SMR" id="A6VPG3"/>
<dbReference type="STRING" id="339671.Asuc_1502"/>
<dbReference type="KEGG" id="asu:Asuc_1502"/>
<dbReference type="eggNOG" id="COG0807">
    <property type="taxonomic scope" value="Bacteria"/>
</dbReference>
<dbReference type="HOGENOM" id="CLU_020273_2_1_6"/>
<dbReference type="OrthoDB" id="9793111at2"/>
<dbReference type="UniPathway" id="UPA00275">
    <property type="reaction ID" value="UER00400"/>
</dbReference>
<dbReference type="Proteomes" id="UP000001114">
    <property type="component" value="Chromosome"/>
</dbReference>
<dbReference type="GO" id="GO:0005829">
    <property type="term" value="C:cytosol"/>
    <property type="evidence" value="ECO:0007669"/>
    <property type="project" value="TreeGrafter"/>
</dbReference>
<dbReference type="GO" id="GO:0005525">
    <property type="term" value="F:GTP binding"/>
    <property type="evidence" value="ECO:0007669"/>
    <property type="project" value="UniProtKB-KW"/>
</dbReference>
<dbReference type="GO" id="GO:0003935">
    <property type="term" value="F:GTP cyclohydrolase II activity"/>
    <property type="evidence" value="ECO:0007669"/>
    <property type="project" value="UniProtKB-UniRule"/>
</dbReference>
<dbReference type="GO" id="GO:0008270">
    <property type="term" value="F:zinc ion binding"/>
    <property type="evidence" value="ECO:0007669"/>
    <property type="project" value="UniProtKB-UniRule"/>
</dbReference>
<dbReference type="GO" id="GO:0009231">
    <property type="term" value="P:riboflavin biosynthetic process"/>
    <property type="evidence" value="ECO:0007669"/>
    <property type="project" value="UniProtKB-UniRule"/>
</dbReference>
<dbReference type="CDD" id="cd00641">
    <property type="entry name" value="GTP_cyclohydro2"/>
    <property type="match status" value="1"/>
</dbReference>
<dbReference type="FunFam" id="3.40.50.10990:FF:000002">
    <property type="entry name" value="GTP cyclohydrolase-2"/>
    <property type="match status" value="1"/>
</dbReference>
<dbReference type="Gene3D" id="3.40.50.10990">
    <property type="entry name" value="GTP cyclohydrolase II"/>
    <property type="match status" value="1"/>
</dbReference>
<dbReference type="HAMAP" id="MF_00179">
    <property type="entry name" value="RibA"/>
    <property type="match status" value="1"/>
</dbReference>
<dbReference type="InterPro" id="IPR032677">
    <property type="entry name" value="GTP_cyclohydro_II"/>
</dbReference>
<dbReference type="InterPro" id="IPR000926">
    <property type="entry name" value="RibA"/>
</dbReference>
<dbReference type="InterPro" id="IPR036144">
    <property type="entry name" value="RibA-like_sf"/>
</dbReference>
<dbReference type="NCBIfam" id="NF001591">
    <property type="entry name" value="PRK00393.1"/>
    <property type="match status" value="1"/>
</dbReference>
<dbReference type="NCBIfam" id="TIGR00505">
    <property type="entry name" value="ribA"/>
    <property type="match status" value="1"/>
</dbReference>
<dbReference type="PANTHER" id="PTHR21327:SF18">
    <property type="entry name" value="3,4-DIHYDROXY-2-BUTANONE 4-PHOSPHATE SYNTHASE"/>
    <property type="match status" value="1"/>
</dbReference>
<dbReference type="PANTHER" id="PTHR21327">
    <property type="entry name" value="GTP CYCLOHYDROLASE II-RELATED"/>
    <property type="match status" value="1"/>
</dbReference>
<dbReference type="Pfam" id="PF00925">
    <property type="entry name" value="GTP_cyclohydro2"/>
    <property type="match status" value="1"/>
</dbReference>
<dbReference type="SUPFAM" id="SSF142695">
    <property type="entry name" value="RibA-like"/>
    <property type="match status" value="1"/>
</dbReference>
<gene>
    <name evidence="1" type="primary">ribA</name>
    <name type="ordered locus">Asuc_1502</name>
</gene>
<reference key="1">
    <citation type="journal article" date="2010" name="BMC Genomics">
        <title>A genomic perspective on the potential of Actinobacillus succinogenes for industrial succinate production.</title>
        <authorList>
            <person name="McKinlay J.B."/>
            <person name="Laivenieks M."/>
            <person name="Schindler B.D."/>
            <person name="McKinlay A.A."/>
            <person name="Siddaramappa S."/>
            <person name="Challacombe J.F."/>
            <person name="Lowry S.R."/>
            <person name="Clum A."/>
            <person name="Lapidus A.L."/>
            <person name="Burkhart K.B."/>
            <person name="Harkins V."/>
            <person name="Vieille C."/>
        </authorList>
    </citation>
    <scope>NUCLEOTIDE SEQUENCE [LARGE SCALE GENOMIC DNA]</scope>
    <source>
        <strain>ATCC 55618 / DSM 22257 / CCUG 43843 / 130Z</strain>
    </source>
</reference>
<keyword id="KW-0342">GTP-binding</keyword>
<keyword id="KW-0378">Hydrolase</keyword>
<keyword id="KW-0479">Metal-binding</keyword>
<keyword id="KW-0547">Nucleotide-binding</keyword>
<keyword id="KW-1185">Reference proteome</keyword>
<keyword id="KW-0686">Riboflavin biosynthesis</keyword>
<keyword id="KW-0862">Zinc</keyword>
<feature type="chain" id="PRO_1000071647" description="GTP cyclohydrolase-2">
    <location>
        <begin position="1"/>
        <end position="217"/>
    </location>
</feature>
<feature type="active site" description="Proton acceptor" evidence="1">
    <location>
        <position position="127"/>
    </location>
</feature>
<feature type="active site" description="Nucleophile" evidence="1">
    <location>
        <position position="129"/>
    </location>
</feature>
<feature type="binding site" evidence="1">
    <location>
        <begin position="50"/>
        <end position="54"/>
    </location>
    <ligand>
        <name>GTP</name>
        <dbReference type="ChEBI" id="CHEBI:37565"/>
    </ligand>
</feature>
<feature type="binding site" evidence="1">
    <location>
        <position position="55"/>
    </location>
    <ligand>
        <name>Zn(2+)</name>
        <dbReference type="ChEBI" id="CHEBI:29105"/>
        <note>catalytic</note>
    </ligand>
</feature>
<feature type="binding site" evidence="1">
    <location>
        <position position="66"/>
    </location>
    <ligand>
        <name>Zn(2+)</name>
        <dbReference type="ChEBI" id="CHEBI:29105"/>
        <note>catalytic</note>
    </ligand>
</feature>
<feature type="binding site" evidence="1">
    <location>
        <position position="68"/>
    </location>
    <ligand>
        <name>Zn(2+)</name>
        <dbReference type="ChEBI" id="CHEBI:29105"/>
        <note>catalytic</note>
    </ligand>
</feature>
<feature type="binding site" evidence="1">
    <location>
        <position position="71"/>
    </location>
    <ligand>
        <name>GTP</name>
        <dbReference type="ChEBI" id="CHEBI:37565"/>
    </ligand>
</feature>
<feature type="binding site" evidence="1">
    <location>
        <begin position="93"/>
        <end position="95"/>
    </location>
    <ligand>
        <name>GTP</name>
        <dbReference type="ChEBI" id="CHEBI:37565"/>
    </ligand>
</feature>
<feature type="binding site" evidence="1">
    <location>
        <position position="115"/>
    </location>
    <ligand>
        <name>GTP</name>
        <dbReference type="ChEBI" id="CHEBI:37565"/>
    </ligand>
</feature>
<feature type="binding site" evidence="1">
    <location>
        <position position="150"/>
    </location>
    <ligand>
        <name>GTP</name>
        <dbReference type="ChEBI" id="CHEBI:37565"/>
    </ligand>
</feature>
<feature type="binding site" evidence="1">
    <location>
        <position position="155"/>
    </location>
    <ligand>
        <name>GTP</name>
        <dbReference type="ChEBI" id="CHEBI:37565"/>
    </ligand>
</feature>